<gene>
    <name evidence="1" type="primary">rplX</name>
    <name type="ordered locus">JJD26997_2070</name>
</gene>
<sequence>MAVKLKIKKGDNVKVVTGDDKGKTGKVLAVYPKTLKVVVEGCKIAKKAIKPSEKNPNGGFINKEMPMDISNVAKVQE</sequence>
<proteinExistence type="inferred from homology"/>
<keyword id="KW-0687">Ribonucleoprotein</keyword>
<keyword id="KW-0689">Ribosomal protein</keyword>
<keyword id="KW-0694">RNA-binding</keyword>
<keyword id="KW-0699">rRNA-binding</keyword>
<reference key="1">
    <citation type="submission" date="2007-07" db="EMBL/GenBank/DDBJ databases">
        <title>Complete genome sequence of Campylobacter jejuni subsp doylei 269.97 isolated from human blood.</title>
        <authorList>
            <person name="Fouts D.E."/>
            <person name="Mongodin E.F."/>
            <person name="Puiu D."/>
            <person name="Sebastian Y."/>
            <person name="Miller W.G."/>
            <person name="Mandrell R.E."/>
            <person name="Lastovica A.J."/>
            <person name="Nelson K.E."/>
        </authorList>
    </citation>
    <scope>NUCLEOTIDE SEQUENCE [LARGE SCALE GENOMIC DNA]</scope>
    <source>
        <strain>ATCC BAA-1458 / RM4099 / 269.97</strain>
    </source>
</reference>
<dbReference type="EMBL" id="CP000768">
    <property type="protein sequence ID" value="ABS43771.1"/>
    <property type="molecule type" value="Genomic_DNA"/>
</dbReference>
<dbReference type="SMR" id="A7H645"/>
<dbReference type="KEGG" id="cjd:JJD26997_2070"/>
<dbReference type="HOGENOM" id="CLU_093315_3_0_7"/>
<dbReference type="Proteomes" id="UP000002302">
    <property type="component" value="Chromosome"/>
</dbReference>
<dbReference type="GO" id="GO:1990904">
    <property type="term" value="C:ribonucleoprotein complex"/>
    <property type="evidence" value="ECO:0007669"/>
    <property type="project" value="UniProtKB-KW"/>
</dbReference>
<dbReference type="GO" id="GO:0005840">
    <property type="term" value="C:ribosome"/>
    <property type="evidence" value="ECO:0007669"/>
    <property type="project" value="UniProtKB-KW"/>
</dbReference>
<dbReference type="GO" id="GO:0019843">
    <property type="term" value="F:rRNA binding"/>
    <property type="evidence" value="ECO:0007669"/>
    <property type="project" value="UniProtKB-UniRule"/>
</dbReference>
<dbReference type="GO" id="GO:0003735">
    <property type="term" value="F:structural constituent of ribosome"/>
    <property type="evidence" value="ECO:0007669"/>
    <property type="project" value="InterPro"/>
</dbReference>
<dbReference type="GO" id="GO:0006412">
    <property type="term" value="P:translation"/>
    <property type="evidence" value="ECO:0007669"/>
    <property type="project" value="UniProtKB-UniRule"/>
</dbReference>
<dbReference type="CDD" id="cd06089">
    <property type="entry name" value="KOW_RPL26"/>
    <property type="match status" value="1"/>
</dbReference>
<dbReference type="Gene3D" id="2.30.30.30">
    <property type="match status" value="1"/>
</dbReference>
<dbReference type="HAMAP" id="MF_01326_B">
    <property type="entry name" value="Ribosomal_uL24_B"/>
    <property type="match status" value="1"/>
</dbReference>
<dbReference type="InterPro" id="IPR005824">
    <property type="entry name" value="KOW"/>
</dbReference>
<dbReference type="InterPro" id="IPR014722">
    <property type="entry name" value="Rib_uL2_dom2"/>
</dbReference>
<dbReference type="InterPro" id="IPR003256">
    <property type="entry name" value="Ribosomal_uL24"/>
</dbReference>
<dbReference type="InterPro" id="IPR005825">
    <property type="entry name" value="Ribosomal_uL24_CS"/>
</dbReference>
<dbReference type="InterPro" id="IPR041988">
    <property type="entry name" value="Ribosomal_uL24_KOW"/>
</dbReference>
<dbReference type="InterPro" id="IPR008991">
    <property type="entry name" value="Translation_prot_SH3-like_sf"/>
</dbReference>
<dbReference type="NCBIfam" id="TIGR01079">
    <property type="entry name" value="rplX_bact"/>
    <property type="match status" value="1"/>
</dbReference>
<dbReference type="PANTHER" id="PTHR12903">
    <property type="entry name" value="MITOCHONDRIAL RIBOSOMAL PROTEIN L24"/>
    <property type="match status" value="1"/>
</dbReference>
<dbReference type="Pfam" id="PF00467">
    <property type="entry name" value="KOW"/>
    <property type="match status" value="1"/>
</dbReference>
<dbReference type="Pfam" id="PF17136">
    <property type="entry name" value="ribosomal_L24"/>
    <property type="match status" value="1"/>
</dbReference>
<dbReference type="SMART" id="SM00739">
    <property type="entry name" value="KOW"/>
    <property type="match status" value="1"/>
</dbReference>
<dbReference type="SUPFAM" id="SSF50104">
    <property type="entry name" value="Translation proteins SH3-like domain"/>
    <property type="match status" value="1"/>
</dbReference>
<dbReference type="PROSITE" id="PS01108">
    <property type="entry name" value="RIBOSOMAL_L24"/>
    <property type="match status" value="1"/>
</dbReference>
<name>RL24_CAMJD</name>
<comment type="function">
    <text evidence="1">One of two assembly initiator proteins, it binds directly to the 5'-end of the 23S rRNA, where it nucleates assembly of the 50S subunit.</text>
</comment>
<comment type="function">
    <text evidence="1">One of the proteins that surrounds the polypeptide exit tunnel on the outside of the subunit.</text>
</comment>
<comment type="subunit">
    <text evidence="1">Part of the 50S ribosomal subunit.</text>
</comment>
<comment type="similarity">
    <text evidence="1">Belongs to the universal ribosomal protein uL24 family.</text>
</comment>
<feature type="chain" id="PRO_1000052201" description="Large ribosomal subunit protein uL24">
    <location>
        <begin position="1"/>
        <end position="77"/>
    </location>
</feature>
<evidence type="ECO:0000255" key="1">
    <source>
        <dbReference type="HAMAP-Rule" id="MF_01326"/>
    </source>
</evidence>
<evidence type="ECO:0000305" key="2"/>
<accession>A7H645</accession>
<protein>
    <recommendedName>
        <fullName evidence="1">Large ribosomal subunit protein uL24</fullName>
    </recommendedName>
    <alternativeName>
        <fullName evidence="2">50S ribosomal protein L24</fullName>
    </alternativeName>
</protein>
<organism>
    <name type="scientific">Campylobacter jejuni subsp. doylei (strain ATCC BAA-1458 / RM4099 / 269.97)</name>
    <dbReference type="NCBI Taxonomy" id="360109"/>
    <lineage>
        <taxon>Bacteria</taxon>
        <taxon>Pseudomonadati</taxon>
        <taxon>Campylobacterota</taxon>
        <taxon>Epsilonproteobacteria</taxon>
        <taxon>Campylobacterales</taxon>
        <taxon>Campylobacteraceae</taxon>
        <taxon>Campylobacter</taxon>
    </lineage>
</organism>